<reference key="1">
    <citation type="journal article" date="2001" name="Science">
        <title>Comparative genomics of Listeria species.</title>
        <authorList>
            <person name="Glaser P."/>
            <person name="Frangeul L."/>
            <person name="Buchrieser C."/>
            <person name="Rusniok C."/>
            <person name="Amend A."/>
            <person name="Baquero F."/>
            <person name="Berche P."/>
            <person name="Bloecker H."/>
            <person name="Brandt P."/>
            <person name="Chakraborty T."/>
            <person name="Charbit A."/>
            <person name="Chetouani F."/>
            <person name="Couve E."/>
            <person name="de Daruvar A."/>
            <person name="Dehoux P."/>
            <person name="Domann E."/>
            <person name="Dominguez-Bernal G."/>
            <person name="Duchaud E."/>
            <person name="Durant L."/>
            <person name="Dussurget O."/>
            <person name="Entian K.-D."/>
            <person name="Fsihi H."/>
            <person name="Garcia-del Portillo F."/>
            <person name="Garrido P."/>
            <person name="Gautier L."/>
            <person name="Goebel W."/>
            <person name="Gomez-Lopez N."/>
            <person name="Hain T."/>
            <person name="Hauf J."/>
            <person name="Jackson D."/>
            <person name="Jones L.-M."/>
            <person name="Kaerst U."/>
            <person name="Kreft J."/>
            <person name="Kuhn M."/>
            <person name="Kunst F."/>
            <person name="Kurapkat G."/>
            <person name="Madueno E."/>
            <person name="Maitournam A."/>
            <person name="Mata Vicente J."/>
            <person name="Ng E."/>
            <person name="Nedjari H."/>
            <person name="Nordsiek G."/>
            <person name="Novella S."/>
            <person name="de Pablos B."/>
            <person name="Perez-Diaz J.-C."/>
            <person name="Purcell R."/>
            <person name="Remmel B."/>
            <person name="Rose M."/>
            <person name="Schlueter T."/>
            <person name="Simoes N."/>
            <person name="Tierrez A."/>
            <person name="Vazquez-Boland J.-A."/>
            <person name="Voss H."/>
            <person name="Wehland J."/>
            <person name="Cossart P."/>
        </authorList>
    </citation>
    <scope>NUCLEOTIDE SEQUENCE [LARGE SCALE GENOMIC DNA]</scope>
    <source>
        <strain>ATCC BAA-680 / CLIP 11262</strain>
    </source>
</reference>
<gene>
    <name evidence="1" type="primary">cbiA</name>
    <name type="ordered locus">lin1154</name>
</gene>
<dbReference type="EC" id="6.3.5.11" evidence="1"/>
<dbReference type="EMBL" id="AL596167">
    <property type="protein sequence ID" value="CAC96385.1"/>
    <property type="molecule type" value="Genomic_DNA"/>
</dbReference>
<dbReference type="PIR" id="AI1576">
    <property type="entry name" value="AI1576"/>
</dbReference>
<dbReference type="RefSeq" id="WP_010990799.1">
    <property type="nucleotide sequence ID" value="NC_003212.1"/>
</dbReference>
<dbReference type="SMR" id="Q92CL7"/>
<dbReference type="STRING" id="272626.gene:17565484"/>
<dbReference type="GeneID" id="93234602"/>
<dbReference type="KEGG" id="lin:cbiA"/>
<dbReference type="eggNOG" id="COG1797">
    <property type="taxonomic scope" value="Bacteria"/>
</dbReference>
<dbReference type="HOGENOM" id="CLU_022752_2_0_9"/>
<dbReference type="OrthoDB" id="9764035at2"/>
<dbReference type="UniPathway" id="UPA00148">
    <property type="reaction ID" value="UER00231"/>
</dbReference>
<dbReference type="Proteomes" id="UP000002513">
    <property type="component" value="Chromosome"/>
</dbReference>
<dbReference type="GO" id="GO:0005524">
    <property type="term" value="F:ATP binding"/>
    <property type="evidence" value="ECO:0007669"/>
    <property type="project" value="UniProtKB-UniRule"/>
</dbReference>
<dbReference type="GO" id="GO:0042242">
    <property type="term" value="F:cobyrinic acid a,c-diamide synthase activity"/>
    <property type="evidence" value="ECO:0007669"/>
    <property type="project" value="UniProtKB-UniRule"/>
</dbReference>
<dbReference type="GO" id="GO:0009236">
    <property type="term" value="P:cobalamin biosynthetic process"/>
    <property type="evidence" value="ECO:0007669"/>
    <property type="project" value="UniProtKB-UniRule"/>
</dbReference>
<dbReference type="CDD" id="cd05388">
    <property type="entry name" value="CobB_N"/>
    <property type="match status" value="1"/>
</dbReference>
<dbReference type="CDD" id="cd03130">
    <property type="entry name" value="GATase1_CobB"/>
    <property type="match status" value="1"/>
</dbReference>
<dbReference type="Gene3D" id="3.40.50.880">
    <property type="match status" value="1"/>
</dbReference>
<dbReference type="Gene3D" id="3.40.50.300">
    <property type="entry name" value="P-loop containing nucleotide triphosphate hydrolases"/>
    <property type="match status" value="2"/>
</dbReference>
<dbReference type="HAMAP" id="MF_00027">
    <property type="entry name" value="CobB_CbiA"/>
    <property type="match status" value="1"/>
</dbReference>
<dbReference type="InterPro" id="IPR004484">
    <property type="entry name" value="CbiA/CobB_synth"/>
</dbReference>
<dbReference type="InterPro" id="IPR029062">
    <property type="entry name" value="Class_I_gatase-like"/>
</dbReference>
<dbReference type="InterPro" id="IPR002586">
    <property type="entry name" value="CobQ/CobB/MinD/ParA_Nub-bd_dom"/>
</dbReference>
<dbReference type="InterPro" id="IPR011698">
    <property type="entry name" value="GATase_3"/>
</dbReference>
<dbReference type="InterPro" id="IPR027417">
    <property type="entry name" value="P-loop_NTPase"/>
</dbReference>
<dbReference type="NCBIfam" id="TIGR00379">
    <property type="entry name" value="cobB"/>
    <property type="match status" value="1"/>
</dbReference>
<dbReference type="NCBIfam" id="NF002204">
    <property type="entry name" value="PRK01077.1"/>
    <property type="match status" value="1"/>
</dbReference>
<dbReference type="PANTHER" id="PTHR43873">
    <property type="entry name" value="COBYRINATE A,C-DIAMIDE SYNTHASE"/>
    <property type="match status" value="1"/>
</dbReference>
<dbReference type="PANTHER" id="PTHR43873:SF1">
    <property type="entry name" value="COBYRINATE A,C-DIAMIDE SYNTHASE"/>
    <property type="match status" value="1"/>
</dbReference>
<dbReference type="Pfam" id="PF01656">
    <property type="entry name" value="CbiA"/>
    <property type="match status" value="1"/>
</dbReference>
<dbReference type="Pfam" id="PF07685">
    <property type="entry name" value="GATase_3"/>
    <property type="match status" value="1"/>
</dbReference>
<dbReference type="SUPFAM" id="SSF52317">
    <property type="entry name" value="Class I glutamine amidotransferase-like"/>
    <property type="match status" value="1"/>
</dbReference>
<dbReference type="SUPFAM" id="SSF52540">
    <property type="entry name" value="P-loop containing nucleoside triphosphate hydrolases"/>
    <property type="match status" value="1"/>
</dbReference>
<dbReference type="PROSITE" id="PS51274">
    <property type="entry name" value="GATASE_COBBQ"/>
    <property type="match status" value="1"/>
</dbReference>
<name>CBIA_LISIN</name>
<protein>
    <recommendedName>
        <fullName evidence="1">Cobyrinate a,c-diamide synthase</fullName>
        <ecNumber evidence="1">6.3.5.11</ecNumber>
    </recommendedName>
    <alternativeName>
        <fullName evidence="1">Cobyrinic acid a,c-diamide synthetase</fullName>
    </alternativeName>
</protein>
<organism>
    <name type="scientific">Listeria innocua serovar 6a (strain ATCC BAA-680 / CLIP 11262)</name>
    <dbReference type="NCBI Taxonomy" id="272626"/>
    <lineage>
        <taxon>Bacteria</taxon>
        <taxon>Bacillati</taxon>
        <taxon>Bacillota</taxon>
        <taxon>Bacilli</taxon>
        <taxon>Bacillales</taxon>
        <taxon>Listeriaceae</taxon>
        <taxon>Listeria</taxon>
    </lineage>
</organism>
<feature type="chain" id="PRO_0000141259" description="Cobyrinate a,c-diamide synthase">
    <location>
        <begin position="1"/>
        <end position="452"/>
    </location>
</feature>
<feature type="domain" description="GATase cobBQ-type" evidence="1">
    <location>
        <begin position="248"/>
        <end position="441"/>
    </location>
</feature>
<feature type="active site" description="Nucleophile" evidence="1">
    <location>
        <position position="330"/>
    </location>
</feature>
<feature type="site" description="Increases nucleophilicity of active site Cys" evidence="1">
    <location>
        <position position="433"/>
    </location>
</feature>
<keyword id="KW-0067">ATP-binding</keyword>
<keyword id="KW-0169">Cobalamin biosynthesis</keyword>
<keyword id="KW-0315">Glutamine amidotransferase</keyword>
<keyword id="KW-0436">Ligase</keyword>
<keyword id="KW-0460">Magnesium</keyword>
<keyword id="KW-0547">Nucleotide-binding</keyword>
<evidence type="ECO:0000255" key="1">
    <source>
        <dbReference type="HAMAP-Rule" id="MF_00027"/>
    </source>
</evidence>
<comment type="function">
    <text evidence="1">Catalyzes the ATP-dependent amidation of the two carboxylate groups at positions a and c of cobyrinate, using either L-glutamine or ammonia as the nitrogen source.</text>
</comment>
<comment type="catalytic activity">
    <reaction evidence="1">
        <text>cob(II)yrinate + 2 L-glutamine + 2 ATP + 2 H2O = cob(II)yrinate a,c diamide + 2 L-glutamate + 2 ADP + 2 phosphate + 2 H(+)</text>
        <dbReference type="Rhea" id="RHEA:26289"/>
        <dbReference type="ChEBI" id="CHEBI:15377"/>
        <dbReference type="ChEBI" id="CHEBI:15378"/>
        <dbReference type="ChEBI" id="CHEBI:29985"/>
        <dbReference type="ChEBI" id="CHEBI:30616"/>
        <dbReference type="ChEBI" id="CHEBI:43474"/>
        <dbReference type="ChEBI" id="CHEBI:58359"/>
        <dbReference type="ChEBI" id="CHEBI:58537"/>
        <dbReference type="ChEBI" id="CHEBI:58894"/>
        <dbReference type="ChEBI" id="CHEBI:456216"/>
        <dbReference type="EC" id="6.3.5.11"/>
    </reaction>
</comment>
<comment type="cofactor">
    <cofactor evidence="1">
        <name>Mg(2+)</name>
        <dbReference type="ChEBI" id="CHEBI:18420"/>
    </cofactor>
</comment>
<comment type="pathway">
    <text evidence="1">Cofactor biosynthesis; adenosylcobalamin biosynthesis; cob(II)yrinate a,c-diamide from sirohydrochlorin (anaerobic route): step 10/10.</text>
</comment>
<comment type="domain">
    <text evidence="1">Comprises of two domains. The C-terminal domain contains the binding site for glutamine and catalyzes the hydrolysis of this substrate to glutamate and ammonia. The N-terminal domain is anticipated to bind ATP and cobyrinate and catalyzes the ultimate synthesis of the diamide product. The ammonia produced via the glutaminase domain is probably translocated to the adjacent domain via a molecular tunnel, where it reacts with an activated intermediate.</text>
</comment>
<comment type="miscellaneous">
    <text evidence="1">The a and c carboxylates of cobyrinate are activated for nucleophilic attack via formation of a phosphorylated intermediate by ATP. CbiA catalyzes first the amidation of the c-carboxylate, and then that of the a-carboxylate.</text>
</comment>
<comment type="similarity">
    <text evidence="1">Belongs to the CobB/CbiA family.</text>
</comment>
<proteinExistence type="inferred from homology"/>
<accession>Q92CL7</accession>
<sequence length="452" mass="49762">MNKILIAAASSGAGKTTVTLGIMQALKKRGFAVQPFKVGPDYIDTNYHQAITGVASINLDSFLIDDDEMLASLFQKHGESADISVIEGVMGLFDGLGTDRDNASTSFIAKCTKTPVILVVDGKAISTSAAAIVDGFNRFDPELKIAGVIINRVASENHFSLIKGAIERYTDVPVLGYLPKNAAVALPERHLGLVPQEEMTELEAKWELLSDLITTHVDLDKLLEISKSSENLSTSKAQMKVADFSGLRVAYALDAAFHFYYQDNLDLIRLTGAELIPFSPLEDNEVPEADFIYIGGGFPEIFAKQLNDNRSMRKSILAAHEKGIPIYAECGGLMYLGSSLEMEGKQYEMVGVFNGISKMTTRLRKFGYCIAEPLEETLIGKKGMSIRGHEFHHSVFETTETACMKLSKKRDGEIVKEWRGGYQKGNTFASYLHIHFYQNPAILMQMFGAGKR</sequence>